<comment type="function">
    <text evidence="1">Catalyzes the formation of acetyl phosphate from acetate and ATP. Can also catalyze the reverse reaction.</text>
</comment>
<comment type="catalytic activity">
    <reaction evidence="1">
        <text>acetate + ATP = acetyl phosphate + ADP</text>
        <dbReference type="Rhea" id="RHEA:11352"/>
        <dbReference type="ChEBI" id="CHEBI:22191"/>
        <dbReference type="ChEBI" id="CHEBI:30089"/>
        <dbReference type="ChEBI" id="CHEBI:30616"/>
        <dbReference type="ChEBI" id="CHEBI:456216"/>
        <dbReference type="EC" id="2.7.2.1"/>
    </reaction>
</comment>
<comment type="cofactor">
    <cofactor evidence="1">
        <name>Mg(2+)</name>
        <dbReference type="ChEBI" id="CHEBI:18420"/>
    </cofactor>
    <cofactor evidence="1">
        <name>Mn(2+)</name>
        <dbReference type="ChEBI" id="CHEBI:29035"/>
    </cofactor>
    <text evidence="1">Mg(2+). Can also accept Mn(2+).</text>
</comment>
<comment type="pathway">
    <text evidence="1">Metabolic intermediate biosynthesis; acetyl-CoA biosynthesis; acetyl-CoA from acetate: step 1/2.</text>
</comment>
<comment type="subunit">
    <text evidence="1">Homodimer.</text>
</comment>
<comment type="subcellular location">
    <subcellularLocation>
        <location evidence="1">Cytoplasm</location>
    </subcellularLocation>
</comment>
<comment type="similarity">
    <text evidence="1">Belongs to the acetokinase family.</text>
</comment>
<evidence type="ECO:0000255" key="1">
    <source>
        <dbReference type="HAMAP-Rule" id="MF_00020"/>
    </source>
</evidence>
<gene>
    <name evidence="1" type="primary">ackA</name>
    <name type="ordered locus">Glov_1754</name>
</gene>
<keyword id="KW-0067">ATP-binding</keyword>
<keyword id="KW-0963">Cytoplasm</keyword>
<keyword id="KW-0418">Kinase</keyword>
<keyword id="KW-0460">Magnesium</keyword>
<keyword id="KW-0479">Metal-binding</keyword>
<keyword id="KW-0547">Nucleotide-binding</keyword>
<keyword id="KW-1185">Reference proteome</keyword>
<keyword id="KW-0808">Transferase</keyword>
<proteinExistence type="inferred from homology"/>
<name>ACKA_TRIL1</name>
<sequence>MIIMALNCGSSSVKYQLFDWDKKVVVAKGMVERVIVGDSYIVHEVPGRDNYKLEQDCPDHRAAIDLVIRTVTDRECGVLQSVAEISAVGHRVVHGGEKFTCSVRIDDDVLNAVKDVQHLAPLHNPPNIEGIEAARALMPAIPHVAIFDTAFHQTMPEHAFLYPVPYDWYENHGVRRYGFHGTSHLYVSKRAAMLLGKPAEQCNIITMHIGNGVSHCAIKGGVSVDTTMGLTPLEGAVMGTRSGDIDPAIPAFMMQKENLSAKEIDSVLNKKSGILGITGRYTDRRDVIEHAAKGDHRCQLALDIEAYRLKKYIGAYMAAIGKLDAVVFTAGVGEMGAAIREKAIEGLEHIGIHLDRERNAGAMTRKRESLITTDDSPVKVYVIPTDEELVFTEDVVAILNGTYTDHMQFEYSFAKPDFVRT</sequence>
<accession>B3EB76</accession>
<protein>
    <recommendedName>
        <fullName evidence="1">Acetate kinase</fullName>
        <ecNumber evidence="1">2.7.2.1</ecNumber>
    </recommendedName>
    <alternativeName>
        <fullName evidence="1">Acetokinase</fullName>
    </alternativeName>
</protein>
<reference key="1">
    <citation type="submission" date="2008-05" db="EMBL/GenBank/DDBJ databases">
        <title>Complete sequence of chromosome of Geobacter lovleyi SZ.</title>
        <authorList>
            <consortium name="US DOE Joint Genome Institute"/>
            <person name="Lucas S."/>
            <person name="Copeland A."/>
            <person name="Lapidus A."/>
            <person name="Glavina del Rio T."/>
            <person name="Dalin E."/>
            <person name="Tice H."/>
            <person name="Bruce D."/>
            <person name="Goodwin L."/>
            <person name="Pitluck S."/>
            <person name="Chertkov O."/>
            <person name="Meincke L."/>
            <person name="Brettin T."/>
            <person name="Detter J.C."/>
            <person name="Han C."/>
            <person name="Tapia R."/>
            <person name="Kuske C.R."/>
            <person name="Schmutz J."/>
            <person name="Larimer F."/>
            <person name="Land M."/>
            <person name="Hauser L."/>
            <person name="Kyrpides N."/>
            <person name="Mikhailova N."/>
            <person name="Sung Y."/>
            <person name="Fletcher K.E."/>
            <person name="Ritalahti K.M."/>
            <person name="Loeffler F.E."/>
            <person name="Richardson P."/>
        </authorList>
    </citation>
    <scope>NUCLEOTIDE SEQUENCE [LARGE SCALE GENOMIC DNA]</scope>
    <source>
        <strain>ATCC BAA-1151 / DSM 17278 / SZ</strain>
    </source>
</reference>
<feature type="chain" id="PRO_1000089976" description="Acetate kinase">
    <location>
        <begin position="1"/>
        <end position="421"/>
    </location>
</feature>
<feature type="active site" description="Proton donor/acceptor" evidence="1">
    <location>
        <position position="148"/>
    </location>
</feature>
<feature type="binding site" evidence="1">
    <location>
        <position position="7"/>
    </location>
    <ligand>
        <name>Mg(2+)</name>
        <dbReference type="ChEBI" id="CHEBI:18420"/>
    </ligand>
</feature>
<feature type="binding site" evidence="1">
    <location>
        <position position="14"/>
    </location>
    <ligand>
        <name>ATP</name>
        <dbReference type="ChEBI" id="CHEBI:30616"/>
    </ligand>
</feature>
<feature type="binding site" evidence="1">
    <location>
        <position position="91"/>
    </location>
    <ligand>
        <name>substrate</name>
    </ligand>
</feature>
<feature type="binding site" evidence="1">
    <location>
        <begin position="208"/>
        <end position="212"/>
    </location>
    <ligand>
        <name>ATP</name>
        <dbReference type="ChEBI" id="CHEBI:30616"/>
    </ligand>
</feature>
<feature type="binding site" evidence="1">
    <location>
        <begin position="283"/>
        <end position="285"/>
    </location>
    <ligand>
        <name>ATP</name>
        <dbReference type="ChEBI" id="CHEBI:30616"/>
    </ligand>
</feature>
<feature type="binding site" evidence="1">
    <location>
        <position position="387"/>
    </location>
    <ligand>
        <name>Mg(2+)</name>
        <dbReference type="ChEBI" id="CHEBI:18420"/>
    </ligand>
</feature>
<feature type="site" description="Transition state stabilizer" evidence="1">
    <location>
        <position position="180"/>
    </location>
</feature>
<feature type="site" description="Transition state stabilizer" evidence="1">
    <location>
        <position position="241"/>
    </location>
</feature>
<dbReference type="EC" id="2.7.2.1" evidence="1"/>
<dbReference type="EMBL" id="CP001089">
    <property type="protein sequence ID" value="ACD95470.1"/>
    <property type="molecule type" value="Genomic_DNA"/>
</dbReference>
<dbReference type="RefSeq" id="WP_012469810.1">
    <property type="nucleotide sequence ID" value="NC_010814.1"/>
</dbReference>
<dbReference type="SMR" id="B3EB76"/>
<dbReference type="STRING" id="398767.Glov_1754"/>
<dbReference type="KEGG" id="glo:Glov_1754"/>
<dbReference type="eggNOG" id="COG0282">
    <property type="taxonomic scope" value="Bacteria"/>
</dbReference>
<dbReference type="HOGENOM" id="CLU_020352_0_1_7"/>
<dbReference type="OrthoDB" id="9802453at2"/>
<dbReference type="UniPathway" id="UPA00340">
    <property type="reaction ID" value="UER00458"/>
</dbReference>
<dbReference type="Proteomes" id="UP000002420">
    <property type="component" value="Chromosome"/>
</dbReference>
<dbReference type="GO" id="GO:0005737">
    <property type="term" value="C:cytoplasm"/>
    <property type="evidence" value="ECO:0007669"/>
    <property type="project" value="UniProtKB-SubCell"/>
</dbReference>
<dbReference type="GO" id="GO:0008776">
    <property type="term" value="F:acetate kinase activity"/>
    <property type="evidence" value="ECO:0007669"/>
    <property type="project" value="UniProtKB-UniRule"/>
</dbReference>
<dbReference type="GO" id="GO:0005524">
    <property type="term" value="F:ATP binding"/>
    <property type="evidence" value="ECO:0007669"/>
    <property type="project" value="UniProtKB-KW"/>
</dbReference>
<dbReference type="GO" id="GO:0000287">
    <property type="term" value="F:magnesium ion binding"/>
    <property type="evidence" value="ECO:0007669"/>
    <property type="project" value="UniProtKB-UniRule"/>
</dbReference>
<dbReference type="GO" id="GO:0006083">
    <property type="term" value="P:acetate metabolic process"/>
    <property type="evidence" value="ECO:0007669"/>
    <property type="project" value="TreeGrafter"/>
</dbReference>
<dbReference type="GO" id="GO:0006085">
    <property type="term" value="P:acetyl-CoA biosynthetic process"/>
    <property type="evidence" value="ECO:0007669"/>
    <property type="project" value="UniProtKB-UniRule"/>
</dbReference>
<dbReference type="CDD" id="cd24010">
    <property type="entry name" value="ASKHA_NBD_AcK_PK"/>
    <property type="match status" value="1"/>
</dbReference>
<dbReference type="Gene3D" id="3.30.420.40">
    <property type="match status" value="2"/>
</dbReference>
<dbReference type="HAMAP" id="MF_00020">
    <property type="entry name" value="Acetate_kinase"/>
    <property type="match status" value="1"/>
</dbReference>
<dbReference type="InterPro" id="IPR004372">
    <property type="entry name" value="Ac/propionate_kinase"/>
</dbReference>
<dbReference type="InterPro" id="IPR000890">
    <property type="entry name" value="Aliphatic_acid_kin_short-chain"/>
</dbReference>
<dbReference type="InterPro" id="IPR023865">
    <property type="entry name" value="Aliphatic_acid_kinase_CS"/>
</dbReference>
<dbReference type="InterPro" id="IPR043129">
    <property type="entry name" value="ATPase_NBD"/>
</dbReference>
<dbReference type="NCBIfam" id="TIGR00016">
    <property type="entry name" value="ackA"/>
    <property type="match status" value="1"/>
</dbReference>
<dbReference type="PANTHER" id="PTHR21060">
    <property type="entry name" value="ACETATE KINASE"/>
    <property type="match status" value="1"/>
</dbReference>
<dbReference type="PANTHER" id="PTHR21060:SF15">
    <property type="entry name" value="ACETATE KINASE-RELATED"/>
    <property type="match status" value="1"/>
</dbReference>
<dbReference type="Pfam" id="PF00871">
    <property type="entry name" value="Acetate_kinase"/>
    <property type="match status" value="1"/>
</dbReference>
<dbReference type="PIRSF" id="PIRSF000722">
    <property type="entry name" value="Acetate_prop_kin"/>
    <property type="match status" value="1"/>
</dbReference>
<dbReference type="PRINTS" id="PR00471">
    <property type="entry name" value="ACETATEKNASE"/>
</dbReference>
<dbReference type="SUPFAM" id="SSF53067">
    <property type="entry name" value="Actin-like ATPase domain"/>
    <property type="match status" value="2"/>
</dbReference>
<dbReference type="PROSITE" id="PS01075">
    <property type="entry name" value="ACETATE_KINASE_1"/>
    <property type="match status" value="1"/>
</dbReference>
<organism>
    <name type="scientific">Trichlorobacter lovleyi (strain ATCC BAA-1151 / DSM 17278 / SZ)</name>
    <name type="common">Geobacter lovleyi</name>
    <dbReference type="NCBI Taxonomy" id="398767"/>
    <lineage>
        <taxon>Bacteria</taxon>
        <taxon>Pseudomonadati</taxon>
        <taxon>Thermodesulfobacteriota</taxon>
        <taxon>Desulfuromonadia</taxon>
        <taxon>Geobacterales</taxon>
        <taxon>Geobacteraceae</taxon>
        <taxon>Trichlorobacter</taxon>
    </lineage>
</organism>